<name>MED14_YEAST</name>
<dbReference type="EMBL" id="D90051">
    <property type="protein sequence ID" value="BAA14104.1"/>
    <property type="molecule type" value="Genomic_DNA"/>
</dbReference>
<dbReference type="EMBL" id="Z73243">
    <property type="protein sequence ID" value="CAA97628.1"/>
    <property type="molecule type" value="Genomic_DNA"/>
</dbReference>
<dbReference type="EMBL" id="AY692942">
    <property type="protein sequence ID" value="AAT92961.1"/>
    <property type="molecule type" value="Genomic_DNA"/>
</dbReference>
<dbReference type="EMBL" id="BK006945">
    <property type="protein sequence ID" value="DAA09388.1"/>
    <property type="molecule type" value="Genomic_DNA"/>
</dbReference>
<dbReference type="PIR" id="S64903">
    <property type="entry name" value="S64903"/>
</dbReference>
<dbReference type="RefSeq" id="NP_013172.1">
    <property type="nucleotide sequence ID" value="NM_001181958.1"/>
</dbReference>
<dbReference type="PDB" id="5OQM">
    <property type="method" value="EM"/>
    <property type="resolution" value="5.80 A"/>
    <property type="chains" value="l=1-745"/>
</dbReference>
<dbReference type="PDB" id="7UI9">
    <property type="method" value="EM"/>
    <property type="resolution" value="3.30 A"/>
    <property type="chains" value="n=1-1082"/>
</dbReference>
<dbReference type="PDB" id="7UIC">
    <property type="method" value="EM"/>
    <property type="resolution" value="3.70 A"/>
    <property type="chains" value="n=1-1082"/>
</dbReference>
<dbReference type="PDB" id="7UIF">
    <property type="method" value="EM"/>
    <property type="resolution" value="4.60 A"/>
    <property type="chains" value="n=1-1082"/>
</dbReference>
<dbReference type="PDB" id="7UIG">
    <property type="method" value="EM"/>
    <property type="resolution" value="4.30 A"/>
    <property type="chains" value="n=1-1082"/>
</dbReference>
<dbReference type="PDB" id="7UIK">
    <property type="method" value="EM"/>
    <property type="resolution" value="7.70 A"/>
    <property type="chains" value="n=834-1074"/>
</dbReference>
<dbReference type="PDB" id="7UIL">
    <property type="method" value="EM"/>
    <property type="resolution" value="4.30 A"/>
    <property type="chains" value="4/n=1-1082"/>
</dbReference>
<dbReference type="PDB" id="7UIO">
    <property type="method" value="EM"/>
    <property type="resolution" value="3.30 A"/>
    <property type="chains" value="An/Bn=1-1082"/>
</dbReference>
<dbReference type="PDB" id="8CEN">
    <property type="method" value="EM"/>
    <property type="resolution" value="3.00 A"/>
    <property type="chains" value="l=1-745"/>
</dbReference>
<dbReference type="PDB" id="8CEO">
    <property type="method" value="EM"/>
    <property type="resolution" value="3.60 A"/>
    <property type="chains" value="l=1-1082"/>
</dbReference>
<dbReference type="PDBsum" id="5OQM"/>
<dbReference type="PDBsum" id="7UI9"/>
<dbReference type="PDBsum" id="7UIC"/>
<dbReference type="PDBsum" id="7UIF"/>
<dbReference type="PDBsum" id="7UIG"/>
<dbReference type="PDBsum" id="7UIK"/>
<dbReference type="PDBsum" id="7UIL"/>
<dbReference type="PDBsum" id="7UIO"/>
<dbReference type="PDBsum" id="8CEN"/>
<dbReference type="PDBsum" id="8CEO"/>
<dbReference type="EMDB" id="EMD-26542"/>
<dbReference type="EMDB" id="EMD-26543"/>
<dbReference type="EMDB" id="EMD-26544"/>
<dbReference type="EMDB" id="EMD-26545"/>
<dbReference type="EMDB" id="EMD-26547"/>
<dbReference type="EMDB" id="EMD-26548"/>
<dbReference type="EMDB" id="EMD-26551"/>
<dbReference type="EMDB" id="EMD-2786"/>
<dbReference type="EMDB" id="EMD-3850"/>
<dbReference type="SMR" id="P19263"/>
<dbReference type="BioGRID" id="31345">
    <property type="interactions" value="384"/>
</dbReference>
<dbReference type="ComplexPortal" id="CPX-3226">
    <property type="entry name" value="Core mediator complex"/>
</dbReference>
<dbReference type="DIP" id="DIP-1562N"/>
<dbReference type="FunCoup" id="P19263">
    <property type="interactions" value="330"/>
</dbReference>
<dbReference type="IntAct" id="P19263">
    <property type="interactions" value="47"/>
</dbReference>
<dbReference type="MINT" id="P19263"/>
<dbReference type="STRING" id="4932.YLR071C"/>
<dbReference type="iPTMnet" id="P19263"/>
<dbReference type="PaxDb" id="4932-YLR071C"/>
<dbReference type="PeptideAtlas" id="P19263"/>
<dbReference type="EnsemblFungi" id="YLR071C_mRNA">
    <property type="protein sequence ID" value="YLR071C"/>
    <property type="gene ID" value="YLR071C"/>
</dbReference>
<dbReference type="GeneID" id="850760"/>
<dbReference type="KEGG" id="sce:YLR071C"/>
<dbReference type="AGR" id="SGD:S000004061"/>
<dbReference type="SGD" id="S000004061">
    <property type="gene designation" value="RGR1"/>
</dbReference>
<dbReference type="VEuPathDB" id="FungiDB:YLR071C"/>
<dbReference type="eggNOG" id="KOG1875">
    <property type="taxonomic scope" value="Eukaryota"/>
</dbReference>
<dbReference type="GeneTree" id="ENSGT00390000001021"/>
<dbReference type="HOGENOM" id="CLU_286680_0_0_1"/>
<dbReference type="InParanoid" id="P19263"/>
<dbReference type="OMA" id="MIDLLNW"/>
<dbReference type="OrthoDB" id="205099at2759"/>
<dbReference type="BioCyc" id="YEAST:G3O-32223-MONOMER"/>
<dbReference type="BioGRID-ORCS" id="850760">
    <property type="hits" value="0 hits in 10 CRISPR screens"/>
</dbReference>
<dbReference type="PRO" id="PR:P19263"/>
<dbReference type="Proteomes" id="UP000002311">
    <property type="component" value="Chromosome XII"/>
</dbReference>
<dbReference type="RNAct" id="P19263">
    <property type="molecule type" value="protein"/>
</dbReference>
<dbReference type="GO" id="GO:0070847">
    <property type="term" value="C:core mediator complex"/>
    <property type="evidence" value="ECO:0000314"/>
    <property type="project" value="SGD"/>
</dbReference>
<dbReference type="GO" id="GO:0016592">
    <property type="term" value="C:mediator complex"/>
    <property type="evidence" value="ECO:0000318"/>
    <property type="project" value="GO_Central"/>
</dbReference>
<dbReference type="GO" id="GO:0005634">
    <property type="term" value="C:nucleus"/>
    <property type="evidence" value="ECO:0000314"/>
    <property type="project" value="ComplexPortal"/>
</dbReference>
<dbReference type="GO" id="GO:0061629">
    <property type="term" value="F:RNA polymerase II-specific DNA-binding transcription factor binding"/>
    <property type="evidence" value="ECO:0000353"/>
    <property type="project" value="SGD"/>
</dbReference>
<dbReference type="GO" id="GO:0001093">
    <property type="term" value="F:TFIIB-class transcription factor binding"/>
    <property type="evidence" value="ECO:0000314"/>
    <property type="project" value="SGD"/>
</dbReference>
<dbReference type="GO" id="GO:0003712">
    <property type="term" value="F:transcription coregulator activity"/>
    <property type="evidence" value="ECO:0000318"/>
    <property type="project" value="GO_Central"/>
</dbReference>
<dbReference type="GO" id="GO:0000122">
    <property type="term" value="P:negative regulation of transcription by RNA polymerase II"/>
    <property type="evidence" value="ECO:0000315"/>
    <property type="project" value="SGD"/>
</dbReference>
<dbReference type="GO" id="GO:0045944">
    <property type="term" value="P:positive regulation of transcription by RNA polymerase II"/>
    <property type="evidence" value="ECO:0000315"/>
    <property type="project" value="SGD"/>
</dbReference>
<dbReference type="GO" id="GO:0032968">
    <property type="term" value="P:positive regulation of transcription elongation by RNA polymerase II"/>
    <property type="evidence" value="ECO:0000314"/>
    <property type="project" value="ComplexPortal"/>
</dbReference>
<dbReference type="GO" id="GO:0060261">
    <property type="term" value="P:positive regulation of transcription initiation by RNA polymerase II"/>
    <property type="evidence" value="ECO:0000314"/>
    <property type="project" value="ComplexPortal"/>
</dbReference>
<dbReference type="GO" id="GO:0006357">
    <property type="term" value="P:regulation of transcription by RNA polymerase II"/>
    <property type="evidence" value="ECO:0000318"/>
    <property type="project" value="GO_Central"/>
</dbReference>
<dbReference type="GO" id="GO:0051123">
    <property type="term" value="P:RNA polymerase II preinitiation complex assembly"/>
    <property type="evidence" value="ECO:0000314"/>
    <property type="project" value="ComplexPortal"/>
</dbReference>
<dbReference type="InterPro" id="IPR055122">
    <property type="entry name" value="Med14_N"/>
</dbReference>
<dbReference type="InterPro" id="IPR013947">
    <property type="entry name" value="Mediator_Med14"/>
</dbReference>
<dbReference type="PANTHER" id="PTHR12809">
    <property type="entry name" value="MEDIATOR COMPLEX SUBUNIT"/>
    <property type="match status" value="1"/>
</dbReference>
<dbReference type="PANTHER" id="PTHR12809:SF2">
    <property type="entry name" value="MEDIATOR OF RNA POLYMERASE II TRANSCRIPTION SUBUNIT 14"/>
    <property type="match status" value="1"/>
</dbReference>
<dbReference type="Pfam" id="PF08638">
    <property type="entry name" value="Med14"/>
    <property type="match status" value="1"/>
</dbReference>
<reference key="1">
    <citation type="journal article" date="1990" name="Mol. Cell. Biol.">
        <title>Structure and molecular analysis of RGR1, a gene required for glucose repression of Saccharomyces cerevisiae.</title>
        <authorList>
            <person name="Sakai A."/>
            <person name="Shimizu Y."/>
            <person name="Kondou S."/>
            <person name="Chibazakura T."/>
            <person name="Hishinuma F."/>
        </authorList>
    </citation>
    <scope>NUCLEOTIDE SEQUENCE [GENOMIC DNA]</scope>
    <scope>FUNCTION</scope>
    <source>
        <strain>ATCC 204508 / S288c</strain>
    </source>
</reference>
<reference key="2">
    <citation type="journal article" date="1997" name="Nature">
        <title>The nucleotide sequence of Saccharomyces cerevisiae chromosome XII.</title>
        <authorList>
            <person name="Johnston M."/>
            <person name="Hillier L.W."/>
            <person name="Riles L."/>
            <person name="Albermann K."/>
            <person name="Andre B."/>
            <person name="Ansorge W."/>
            <person name="Benes V."/>
            <person name="Brueckner M."/>
            <person name="Delius H."/>
            <person name="Dubois E."/>
            <person name="Duesterhoeft A."/>
            <person name="Entian K.-D."/>
            <person name="Floeth M."/>
            <person name="Goffeau A."/>
            <person name="Hebling U."/>
            <person name="Heumann K."/>
            <person name="Heuss-Neitzel D."/>
            <person name="Hilbert H."/>
            <person name="Hilger F."/>
            <person name="Kleine K."/>
            <person name="Koetter P."/>
            <person name="Louis E.J."/>
            <person name="Messenguy F."/>
            <person name="Mewes H.-W."/>
            <person name="Miosga T."/>
            <person name="Moestl D."/>
            <person name="Mueller-Auer S."/>
            <person name="Nentwich U."/>
            <person name="Obermaier B."/>
            <person name="Piravandi E."/>
            <person name="Pohl T.M."/>
            <person name="Portetelle D."/>
            <person name="Purnelle B."/>
            <person name="Rechmann S."/>
            <person name="Rieger M."/>
            <person name="Rinke M."/>
            <person name="Rose M."/>
            <person name="Scharfe M."/>
            <person name="Scherens B."/>
            <person name="Scholler P."/>
            <person name="Schwager C."/>
            <person name="Schwarz S."/>
            <person name="Underwood A.P."/>
            <person name="Urrestarazu L.A."/>
            <person name="Vandenbol M."/>
            <person name="Verhasselt P."/>
            <person name="Vierendeels F."/>
            <person name="Voet M."/>
            <person name="Volckaert G."/>
            <person name="Voss H."/>
            <person name="Wambutt R."/>
            <person name="Wedler E."/>
            <person name="Wedler H."/>
            <person name="Zimmermann F.K."/>
            <person name="Zollner A."/>
            <person name="Hani J."/>
            <person name="Hoheisel J.D."/>
        </authorList>
    </citation>
    <scope>NUCLEOTIDE SEQUENCE [LARGE SCALE GENOMIC DNA]</scope>
    <source>
        <strain>ATCC 204508 / S288c</strain>
    </source>
</reference>
<reference key="3">
    <citation type="journal article" date="2014" name="G3 (Bethesda)">
        <title>The reference genome sequence of Saccharomyces cerevisiae: Then and now.</title>
        <authorList>
            <person name="Engel S.R."/>
            <person name="Dietrich F.S."/>
            <person name="Fisk D.G."/>
            <person name="Binkley G."/>
            <person name="Balakrishnan R."/>
            <person name="Costanzo M.C."/>
            <person name="Dwight S.S."/>
            <person name="Hitz B.C."/>
            <person name="Karra K."/>
            <person name="Nash R.S."/>
            <person name="Weng S."/>
            <person name="Wong E.D."/>
            <person name="Lloyd P."/>
            <person name="Skrzypek M.S."/>
            <person name="Miyasato S.R."/>
            <person name="Simison M."/>
            <person name="Cherry J.M."/>
        </authorList>
    </citation>
    <scope>GENOME REANNOTATION</scope>
    <source>
        <strain>ATCC 204508 / S288c</strain>
    </source>
</reference>
<reference key="4">
    <citation type="journal article" date="2007" name="Genome Res.">
        <title>Approaching a complete repository of sequence-verified protein-encoding clones for Saccharomyces cerevisiae.</title>
        <authorList>
            <person name="Hu Y."/>
            <person name="Rolfs A."/>
            <person name="Bhullar B."/>
            <person name="Murthy T.V.S."/>
            <person name="Zhu C."/>
            <person name="Berger M.F."/>
            <person name="Camargo A.A."/>
            <person name="Kelley F."/>
            <person name="McCarron S."/>
            <person name="Jepson D."/>
            <person name="Richardson A."/>
            <person name="Raphael J."/>
            <person name="Moreira D."/>
            <person name="Taycher E."/>
            <person name="Zuo D."/>
            <person name="Mohr S."/>
            <person name="Kane M.F."/>
            <person name="Williamson J."/>
            <person name="Simpson A.J.G."/>
            <person name="Bulyk M.L."/>
            <person name="Harlow E."/>
            <person name="Marsischky G."/>
            <person name="Kolodner R.D."/>
            <person name="LaBaer J."/>
        </authorList>
    </citation>
    <scope>NUCLEOTIDE SEQUENCE [GENOMIC DNA]</scope>
    <source>
        <strain>ATCC 204508 / S288c</strain>
    </source>
</reference>
<reference key="5">
    <citation type="journal article" date="1995" name="Proc. Natl. Acad. Sci. U.S.A.">
        <title>Yeast global transcriptional regulators Sin4 and Rgr1 are components of mediator complex/RNA polymerase II holoenzyme.</title>
        <authorList>
            <person name="Li Y."/>
            <person name="Bjoerklund S."/>
            <person name="Jiang Y.W."/>
            <person name="Kim Y.-J."/>
            <person name="Lane W.S."/>
            <person name="Stillman D.J."/>
            <person name="Kornberg R.D."/>
        </authorList>
    </citation>
    <scope>PROTEIN SEQUENCE OF 857-868</scope>
    <scope>COMPONENT OF MEDIATOR COMPLEX</scope>
</reference>
<reference key="6">
    <citation type="journal article" date="2001" name="J. Biol. Chem.">
        <title>Yeast nuclear extract contains two major forms of RNA polymerase II mediator complexes.</title>
        <authorList>
            <person name="Liu Y."/>
            <person name="Ranish J.A."/>
            <person name="Aebersold R."/>
            <person name="Hahn S."/>
        </authorList>
    </citation>
    <scope>PARTIAL PROTEIN SEQUENCE</scope>
    <scope>SUBCELLULAR LOCATION</scope>
    <scope>COMPONENT OF MEDIATOR COMPLEX</scope>
</reference>
<reference key="7">
    <citation type="journal article" date="1995" name="Genetics">
        <title>Genetic and physical interactions between yeast RGR1 and SIN4 in chromatin organization and transcriptional regulation.</title>
        <authorList>
            <person name="Jiang Y.W."/>
            <person name="Dohrmann P.R."/>
            <person name="Stillman D.J."/>
        </authorList>
    </citation>
    <scope>FUNCTION</scope>
</reference>
<reference key="8">
    <citation type="journal article" date="2003" name="Nature">
        <title>Global analysis of protein localization in budding yeast.</title>
        <authorList>
            <person name="Huh W.-K."/>
            <person name="Falvo J.V."/>
            <person name="Gerke L.C."/>
            <person name="Carroll A.S."/>
            <person name="Howson R.W."/>
            <person name="Weissman J.S."/>
            <person name="O'Shea E.K."/>
        </authorList>
    </citation>
    <scope>SUBCELLULAR LOCATION [LARGE SCALE ANALYSIS]</scope>
</reference>
<reference key="9">
    <citation type="journal article" date="2003" name="Nature">
        <title>Global analysis of protein expression in yeast.</title>
        <authorList>
            <person name="Ghaemmaghami S."/>
            <person name="Huh W.-K."/>
            <person name="Bower K."/>
            <person name="Howson R.W."/>
            <person name="Belle A."/>
            <person name="Dephoure N."/>
            <person name="O'Shea E.K."/>
            <person name="Weissman J.S."/>
        </authorList>
    </citation>
    <scope>LEVEL OF PROTEIN EXPRESSION [LARGE SCALE ANALYSIS]</scope>
</reference>
<reference key="10">
    <citation type="journal article" date="2003" name="Proc. Natl. Acad. Sci. U.S.A.">
        <title>Association of the Mediator complex with enhancers of active genes.</title>
        <authorList>
            <person name="Kuras L."/>
            <person name="Borggrefe T."/>
            <person name="Kornberg R.D."/>
        </authorList>
    </citation>
    <scope>ASSOCIATION WITH PROMOTER REGIONS</scope>
</reference>
<reference key="11">
    <citation type="journal article" date="2004" name="Mol. Cell">
        <title>A unified nomenclature for protein subunits of mediator complexes linking transcriptional regulators to RNA polymerase II.</title>
        <authorList>
            <person name="Bourbon H.-M."/>
            <person name="Aguilera A."/>
            <person name="Ansari A.Z."/>
            <person name="Asturias F.J."/>
            <person name="Berk A.J."/>
            <person name="Bjoerklund S."/>
            <person name="Blackwell T.K."/>
            <person name="Borggrefe T."/>
            <person name="Carey M."/>
            <person name="Carlson M."/>
            <person name="Conaway J.W."/>
            <person name="Conaway R.C."/>
            <person name="Emmons S.W."/>
            <person name="Fondell J.D."/>
            <person name="Freedman L.P."/>
            <person name="Fukasawa T."/>
            <person name="Gustafsson C.M."/>
            <person name="Han M."/>
            <person name="He X."/>
            <person name="Herman P.K."/>
            <person name="Hinnebusch A.G."/>
            <person name="Holmberg S."/>
            <person name="Holstege F.C.P."/>
            <person name="Jaehning J.A."/>
            <person name="Kim Y.-J."/>
            <person name="Kuras L."/>
            <person name="Leutz A."/>
            <person name="Lis J.T."/>
            <person name="Meisterernest M."/>
            <person name="Naeaer A.M."/>
            <person name="Nasmyth K."/>
            <person name="Parvin J.D."/>
            <person name="Ptashne M."/>
            <person name="Reinberg D."/>
            <person name="Ronne H."/>
            <person name="Sadowski I."/>
            <person name="Sakurai H."/>
            <person name="Sipiczki M."/>
            <person name="Sternberg P.W."/>
            <person name="Stillman D.J."/>
            <person name="Strich R."/>
            <person name="Struhl K."/>
            <person name="Svejstrup J.Q."/>
            <person name="Tuck S."/>
            <person name="Winston F."/>
            <person name="Roeder R.G."/>
            <person name="Kornberg R.D."/>
        </authorList>
    </citation>
    <scope>NOMENCLATURE</scope>
</reference>
<reference key="12">
    <citation type="journal article" date="2004" name="Mol. Cell. Biol.">
        <title>Two cyclin-dependent kinases promote RNA polymerase II transcription and formation of the scaffold complex.</title>
        <authorList>
            <person name="Liu Y."/>
            <person name="Kung C."/>
            <person name="Fishburn J."/>
            <person name="Ansari A.Z."/>
            <person name="Shokat K.M."/>
            <person name="Hahn S."/>
        </authorList>
    </citation>
    <scope>PHOSPHORYLATION BY KIN28</scope>
</reference>
<reference key="13">
    <citation type="journal article" date="2004" name="Nucleic Acids Res.">
        <title>A high resolution protein interaction map of the yeast Mediator complex.</title>
        <authorList>
            <person name="Guglielmi B."/>
            <person name="van Berkum N.L."/>
            <person name="Klapholz B."/>
            <person name="Bijma T."/>
            <person name="Boube M."/>
            <person name="Boschiero C."/>
            <person name="Bourbon H.-M."/>
            <person name="Holstege F.C.P."/>
            <person name="Werner M."/>
        </authorList>
    </citation>
    <scope>TOPOLOGY OF THE MEDIATOR COMPLEX</scope>
</reference>
<reference key="14">
    <citation type="journal article" date="2005" name="J. Biol. Chem.">
        <title>Preponderance of free mediator in the yeast Saccharomyces cerevisiae.</title>
        <authorList>
            <person name="Takagi Y."/>
            <person name="Chadick J.Z."/>
            <person name="Davis J.A."/>
            <person name="Asturias F.J."/>
        </authorList>
    </citation>
    <scope>CHARACTERIZATION OF THE MEDIATOR COMPLEX</scope>
</reference>
<reference key="15">
    <citation type="journal article" date="2005" name="J. Biol. Chem.">
        <title>Mediator and TFIIH govern carboxyl-terminal domain-dependent transcription in yeast extracts.</title>
        <authorList>
            <person name="Nair D."/>
            <person name="Kim Y."/>
            <person name="Myers L.C."/>
        </authorList>
    </citation>
    <scope>FUNCTION OF THE MEDIATOR COMPLEX</scope>
</reference>
<reference key="16">
    <citation type="journal article" date="2005" name="Mol. Cell. Proteomics">
        <title>Quantitative phosphoproteomics applied to the yeast pheromone signaling pathway.</title>
        <authorList>
            <person name="Gruhler A."/>
            <person name="Olsen J.V."/>
            <person name="Mohammed S."/>
            <person name="Mortensen P."/>
            <person name="Faergeman N.J."/>
            <person name="Mann M."/>
            <person name="Jensen O.N."/>
        </authorList>
    </citation>
    <scope>ACETYLATION [LARGE SCALE ANALYSIS] AT THR-2</scope>
    <scope>PHOSPHORYLATION [LARGE SCALE ANALYSIS] AT SER-7</scope>
    <scope>CLEAVAGE OF INITIATOR METHIONINE [LARGE SCALE ANALYSIS]</scope>
    <scope>IDENTIFICATION BY MASS SPECTROMETRY [LARGE SCALE ANALYSIS]</scope>
    <source>
        <strain>YAL6B</strain>
    </source>
</reference>
<reference key="17">
    <citation type="journal article" date="2006" name="J. Biol. Chem.">
        <title>Mediator as a general transcription factor.</title>
        <authorList>
            <person name="Takagi Y."/>
            <person name="Kornberg R.D."/>
        </authorList>
    </citation>
    <scope>FUNCTION OF THE MEDIATOR COMPLEX</scope>
</reference>
<reference key="18">
    <citation type="journal article" date="2006" name="Mol. Cell">
        <title>Genome-wide location of the coactivator mediator: binding without activation and transient Cdk8 interaction on DNA.</title>
        <authorList>
            <person name="Andrau J.-C."/>
            <person name="van de Pasch L."/>
            <person name="Lijnzaad P."/>
            <person name="Bijma T."/>
            <person name="Koerkamp M.G."/>
            <person name="van de Peppel J."/>
            <person name="Werner M."/>
            <person name="Holstege F.C.P."/>
        </authorList>
    </citation>
    <scope>SUBCELLULAR LOCATION</scope>
</reference>
<reference key="19">
    <citation type="journal article" date="2007" name="J. Biol. Chem.">
        <title>Med19(Rox3) regulates intermodule interactions in the Saccharomyces cerevisiae mediator complex.</title>
        <authorList>
            <person name="Baidoobonso S.M."/>
            <person name="Guidi B.W."/>
            <person name="Myers L.C."/>
        </authorList>
    </citation>
    <scope>INTERACTION WITH SRB5</scope>
    <scope>CHARACTERIZATION OF THE MEDIATOR COMPLEX</scope>
    <scope>INTERACTION OF THE MEDIATOR COMPLEX WITH RNA POLYMERASE II</scope>
</reference>
<reference key="20">
    <citation type="journal article" date="2007" name="J. Proteome Res.">
        <title>Large-scale phosphorylation analysis of alpha-factor-arrested Saccharomyces cerevisiae.</title>
        <authorList>
            <person name="Li X."/>
            <person name="Gerber S.A."/>
            <person name="Rudner A.D."/>
            <person name="Beausoleil S.A."/>
            <person name="Haas W."/>
            <person name="Villen J."/>
            <person name="Elias J.E."/>
            <person name="Gygi S.P."/>
        </authorList>
    </citation>
    <scope>PHOSPHORYLATION [LARGE SCALE ANALYSIS] AT THR-1036</scope>
    <scope>IDENTIFICATION BY MASS SPECTROMETRY [LARGE SCALE ANALYSIS]</scope>
    <source>
        <strain>ADR376</strain>
    </source>
</reference>
<reference key="21">
    <citation type="journal article" date="2008" name="Mol. Cell. Proteomics">
        <title>A multidimensional chromatography technology for in-depth phosphoproteome analysis.</title>
        <authorList>
            <person name="Albuquerque C.P."/>
            <person name="Smolka M.B."/>
            <person name="Payne S.H."/>
            <person name="Bafna V."/>
            <person name="Eng J."/>
            <person name="Zhou H."/>
        </authorList>
    </citation>
    <scope>PHOSPHORYLATION [LARGE SCALE ANALYSIS] AT SER-7</scope>
    <scope>IDENTIFICATION BY MASS SPECTROMETRY [LARGE SCALE ANALYSIS]</scope>
</reference>
<reference key="22">
    <citation type="journal article" date="2002" name="Mol. Cell">
        <title>Structure of the yeast RNA polymerase II holoenzyme: mediator conformation and polymerase interaction.</title>
        <authorList>
            <person name="Davis J.A."/>
            <person name="Takagi Y."/>
            <person name="Kornberg R.D."/>
            <person name="Asturias F.J."/>
        </authorList>
    </citation>
    <scope>ELECTRON MICROSCOPY OF MEDIATOR COMPLEX IN COMPLEX WITH RNA POLYMERASE II</scope>
</reference>
<sequence>MTTTIGSPQMLANEERLSNEMHALKNRSEQNGQEQQGPVKNTQLHGPSATDPETTATQKESLEMVPKDTSAATMTSAPPPALPHVEINQVSLALVIRNLTVFTMKELAQYMKTNVHTQANEPNSAKKIRFLQLIIFLRTQFLKLYVLVKWTRTIKQNNFHVLIDLLNWFRTTNMNVNNCIWALKSSLNSMTNAKLPNVDLVTALEVLSLGRPNLPTHNFKLSGVSNSMDMVDGMAKVPIGLILQRLKDLNLTVSIKIALMNIPKPLNSYHIKNGRIYFTVPNEFEIQLSTVNRQSPLFFVDLKLLFNTEAEQTVSAVTEATSTNGDSENNEENSSSNGNNLPLNKPRLEKLINEILLKSNDPLLSLYNFLHKYVLTLQLYMVHREFLKLANGGKFSKSNLIHNYDSKKSTITVRYWLNGKMDSKGKITIGIQRTTESLILKWDNQSASRAKNMPVIYNNIVSNIEGILDEIMFNHARIIRSELLARDIFQEDEENSDVLLFQLPTTCVSMAPIQLKIDLLSGQFYFRNPTPLLSNYASKINRAEGPEELARILQQLKLDKIIHVLTTMFENTGWSCSRIIKIDKPIRTQVNTGGESVVKKEDNKYAIAGNSTTNSDVSLLLQRDLFIRLPHWPLNWYLILSIISSKTSCVVEKRIGKIVSQRGKWNLKYLDNSNVMTVKLESITYQKIMILQRTILNRIINHMLIDSLNQLEIRNKICSSEMINEQKLPQYIIQGSNTNDNISIITLELESFLEGSKALNSILESSMFLRIDYSNSQIRLYAKFKRNTMMIQCQIDKLYIHFVQEEPLAFYLEESFTNLGIIVQYLTKFRQKLMQLVVLTDVVERLHKNFESENFKIIALQPNEISFKYLSNNDEDDKDCTIKISTNDDSIKNLTVQLSPSNPQHIIQPFLDNSKMDYHFIFSYLQFTSSLFKALKVILNERGGKFHESGSQYSTMVNIGLHNLNEYQIVYYNPQAGTKITICIELKTVLHNGRDKIQFHIHFADVAHITTKSPAYPMMHQVRNQVFMLDTKRLGTPESVKPANASHAIRLGNGVACDPSEIEPILMEIHNILKVDSNSSSS</sequence>
<accession>P19263</accession>
<accession>D6VY72</accession>
<accession>Q07999</accession>
<feature type="initiator methionine" description="Removed" evidence="12">
    <location>
        <position position="1"/>
    </location>
</feature>
<feature type="chain" id="PRO_0000096362" description="Mediator of RNA polymerase II transcription subunit 14">
    <location>
        <begin position="2"/>
        <end position="1082"/>
    </location>
</feature>
<feature type="region of interest" description="Disordered" evidence="1">
    <location>
        <begin position="1"/>
        <end position="80"/>
    </location>
</feature>
<feature type="region of interest" description="Disordered" evidence="1">
    <location>
        <begin position="319"/>
        <end position="343"/>
    </location>
</feature>
<feature type="compositionally biased region" description="Basic and acidic residues" evidence="1">
    <location>
        <begin position="13"/>
        <end position="28"/>
    </location>
</feature>
<feature type="compositionally biased region" description="Polar residues" evidence="1">
    <location>
        <begin position="29"/>
        <end position="59"/>
    </location>
</feature>
<feature type="compositionally biased region" description="Low complexity" evidence="1">
    <location>
        <begin position="321"/>
        <end position="340"/>
    </location>
</feature>
<feature type="modified residue" description="N-acetylthreonine" evidence="12">
    <location>
        <position position="2"/>
    </location>
</feature>
<feature type="modified residue" description="Phosphoserine" evidence="12 14">
    <location>
        <position position="7"/>
    </location>
</feature>
<feature type="modified residue" description="Phosphothreonine" evidence="13">
    <location>
        <position position="1036"/>
    </location>
</feature>
<feature type="sequence conflict" description="In Ref. 1; BAA14104." evidence="11" ref="1">
    <original>G</original>
    <variation>S</variation>
    <location>
        <position position="46"/>
    </location>
</feature>
<feature type="sequence conflict" description="In Ref. 1; BAA14104." evidence="11" ref="1">
    <original>D</original>
    <variation>V</variation>
    <location>
        <position position="51"/>
    </location>
</feature>
<feature type="sequence conflict" description="In Ref. 1; BAA14104." evidence="11" ref="1">
    <original>A</original>
    <variation>T</variation>
    <location>
        <position position="56"/>
    </location>
</feature>
<feature type="sequence conflict" description="In Ref. 1; BAA14104." evidence="11" ref="1">
    <original>E</original>
    <variation>V</variation>
    <location>
        <position position="285"/>
    </location>
</feature>
<feature type="sequence conflict" description="In Ref. 1; BAA14104." evidence="11" ref="1">
    <original>T</original>
    <variation>A</variation>
    <location>
        <position position="746"/>
    </location>
</feature>
<evidence type="ECO:0000256" key="1">
    <source>
        <dbReference type="SAM" id="MobiDB-lite"/>
    </source>
</evidence>
<evidence type="ECO:0000269" key="2">
    <source>
    </source>
</evidence>
<evidence type="ECO:0000269" key="3">
    <source>
    </source>
</evidence>
<evidence type="ECO:0000269" key="4">
    <source>
    </source>
</evidence>
<evidence type="ECO:0000269" key="5">
    <source>
    </source>
</evidence>
<evidence type="ECO:0000269" key="6">
    <source>
    </source>
</evidence>
<evidence type="ECO:0000269" key="7">
    <source>
    </source>
</evidence>
<evidence type="ECO:0000269" key="8">
    <source>
    </source>
</evidence>
<evidence type="ECO:0000269" key="9">
    <source>
    </source>
</evidence>
<evidence type="ECO:0000269" key="10">
    <source>
    </source>
</evidence>
<evidence type="ECO:0000305" key="11"/>
<evidence type="ECO:0007744" key="12">
    <source>
    </source>
</evidence>
<evidence type="ECO:0007744" key="13">
    <source>
    </source>
</evidence>
<evidence type="ECO:0007744" key="14">
    <source>
    </source>
</evidence>
<keyword id="KW-0002">3D-structure</keyword>
<keyword id="KW-0007">Acetylation</keyword>
<keyword id="KW-0010">Activator</keyword>
<keyword id="KW-0903">Direct protein sequencing</keyword>
<keyword id="KW-0539">Nucleus</keyword>
<keyword id="KW-0597">Phosphoprotein</keyword>
<keyword id="KW-1185">Reference proteome</keyword>
<keyword id="KW-0804">Transcription</keyword>
<keyword id="KW-0805">Transcription regulation</keyword>
<gene>
    <name type="primary">RGR1</name>
    <name type="synonym">MED14</name>
    <name type="ordered locus">YLR071C</name>
</gene>
<organism>
    <name type="scientific">Saccharomyces cerevisiae (strain ATCC 204508 / S288c)</name>
    <name type="common">Baker's yeast</name>
    <dbReference type="NCBI Taxonomy" id="559292"/>
    <lineage>
        <taxon>Eukaryota</taxon>
        <taxon>Fungi</taxon>
        <taxon>Dikarya</taxon>
        <taxon>Ascomycota</taxon>
        <taxon>Saccharomycotina</taxon>
        <taxon>Saccharomycetes</taxon>
        <taxon>Saccharomycetales</taxon>
        <taxon>Saccharomycetaceae</taxon>
        <taxon>Saccharomyces</taxon>
    </lineage>
</organism>
<protein>
    <recommendedName>
        <fullName>Mediator of RNA polymerase II transcription subunit 14</fullName>
    </recommendedName>
    <alternativeName>
        <fullName>Glucose repression regulatory protein 1</fullName>
    </alternativeName>
    <alternativeName>
        <fullName>Mediator complex subunit 14</fullName>
    </alternativeName>
</protein>
<comment type="function">
    <text evidence="5 6 9 10">Component of the Mediator complex, a coactivator involved in the regulated transcription of nearly all RNA polymerase II-dependent genes. Mediator functions as a bridge to convey information from gene-specific regulatory proteins to the basal RNA polymerase II transcription machinery. The Mediator complex, having a compact conformation in its free form, is recruited to promoters by direct interactions with regulatory proteins and serves for the assembly of a functional preinitiation complex with RNA polymerase II and the general transcription factors. The Mediator complex unfolds to an extended conformation and partially surrounds RNA polymerase II, specifically interacting with the unphosphorylated form of the C-terminal domain (CTD) of RNA polymerase II. The Mediator complex dissociates from the RNA polymerase II holoenzyme and stays at the promoter when transcriptional elongation begins.</text>
</comment>
<comment type="subunit">
    <text evidence="8">Component of the Mediator complex, which is composed of at least 21 subunits that form three structurally distinct submodules. The Mediator head module contains MED6, MED8, MED11, SRB4/MED17, SRB5/MED18, ROX3/MED19, SRB2/MED20 and SRB6/MED22, the middle module contains MED1, MED4, NUT1/MED5, MED7, CSE2/MED9, NUT2/MED10, SRB7/MED21 and SOH1/MED31, and the tail module contains MED2, PGD1/MED3, RGR1/MED14, GAL11/MED15 and SIN4/MED16. The head and the middle modules interact directly with RNA polymerase II, whereas the elongated tail module interacts with gene-specific regulatory proteins.</text>
</comment>
<comment type="interaction">
    <interactant intactId="EBI-15087">
        <id>P19263</id>
    </interactant>
    <interactant intactId="EBI-32854">
        <id>Q12321</id>
        <label>MED1</label>
    </interactant>
    <organismsDiffer>false</organismsDiffer>
    <experiments>4</experiments>
</comment>
<comment type="interaction">
    <interactant intactId="EBI-15087">
        <id>P19263</id>
    </interactant>
    <interactant intactId="EBI-12414">
        <id>Q06213</id>
        <label>NUT2</label>
    </interactant>
    <organismsDiffer>false</organismsDiffer>
    <experiments>4</experiments>
</comment>
<comment type="subcellular location">
    <subcellularLocation>
        <location evidence="2 3 7">Nucleus</location>
    </subcellularLocation>
</comment>
<comment type="miscellaneous">
    <text evidence="4">Present with 319 molecules/cell in log phase SD medium.</text>
</comment>
<comment type="similarity">
    <text evidence="11">Belongs to the Mediator complex subunit 14 family.</text>
</comment>
<proteinExistence type="evidence at protein level"/>